<dbReference type="EMBL" id="X01418">
    <property type="protein sequence ID" value="CAA25665.1"/>
    <property type="molecule type" value="Genomic_DNA"/>
</dbReference>
<dbReference type="EMBL" id="X91489">
    <property type="protein sequence ID" value="CAA62787.1"/>
    <property type="molecule type" value="Genomic_DNA"/>
</dbReference>
<dbReference type="EMBL" id="Z72709">
    <property type="protein sequence ID" value="CAA96899.1"/>
    <property type="molecule type" value="Genomic_DNA"/>
</dbReference>
<dbReference type="EMBL" id="EF123139">
    <property type="protein sequence ID" value="ABM97483.1"/>
    <property type="molecule type" value="mRNA"/>
</dbReference>
<dbReference type="EMBL" id="Y00152">
    <property type="protein sequence ID" value="CAA68347.1"/>
    <property type="molecule type" value="Genomic_DNA"/>
</dbReference>
<dbReference type="EMBL" id="BK006941">
    <property type="protein sequence ID" value="DAA07928.1"/>
    <property type="molecule type" value="Genomic_DNA"/>
</dbReference>
<dbReference type="PIR" id="A22786">
    <property type="entry name" value="OLBY4"/>
</dbReference>
<dbReference type="RefSeq" id="NP_011328.1">
    <property type="nucleotide sequence ID" value="NM_001181052.1"/>
</dbReference>
<dbReference type="PDB" id="1HR8">
    <property type="method" value="X-ray"/>
    <property type="resolution" value="2.70 A"/>
    <property type="chains" value="O/P/Q/R=2-25"/>
</dbReference>
<dbReference type="PDB" id="2ODX">
    <property type="method" value="NMR"/>
    <property type="chains" value="A=79-155"/>
</dbReference>
<dbReference type="PDB" id="6GIQ">
    <property type="method" value="EM"/>
    <property type="resolution" value="3.23 A"/>
    <property type="chains" value="d=1-155"/>
</dbReference>
<dbReference type="PDB" id="6HU9">
    <property type="method" value="EM"/>
    <property type="resolution" value="3.35 A"/>
    <property type="chains" value="d/p=26-155"/>
</dbReference>
<dbReference type="PDB" id="6T0B">
    <property type="method" value="EM"/>
    <property type="resolution" value="2.80 A"/>
    <property type="chains" value="d/q=26-155"/>
</dbReference>
<dbReference type="PDB" id="6T15">
    <property type="method" value="EM"/>
    <property type="resolution" value="3.29 A"/>
    <property type="chains" value="d=26-155"/>
</dbReference>
<dbReference type="PDB" id="6YMX">
    <property type="method" value="EM"/>
    <property type="resolution" value="3.17 A"/>
    <property type="chains" value="d=30-146"/>
</dbReference>
<dbReference type="PDB" id="6YMY">
    <property type="method" value="EM"/>
    <property type="resolution" value="3.41 A"/>
    <property type="chains" value="d=30-146"/>
</dbReference>
<dbReference type="PDB" id="7CLV">
    <property type="method" value="NMR"/>
    <property type="chains" value="C=1-25"/>
</dbReference>
<dbReference type="PDB" id="7Z10">
    <property type="method" value="EM"/>
    <property type="resolution" value="3.87 A"/>
    <property type="chains" value="d=29-149"/>
</dbReference>
<dbReference type="PDB" id="8DH6">
    <property type="method" value="EM"/>
    <property type="resolution" value="2.94 A"/>
    <property type="chains" value="d=26-155"/>
</dbReference>
<dbReference type="PDB" id="8E7S">
    <property type="method" value="EM"/>
    <property type="resolution" value="3.20 A"/>
    <property type="chains" value="T/t=1-155"/>
</dbReference>
<dbReference type="PDB" id="8EC0">
    <property type="method" value="EM"/>
    <property type="resolution" value="3.30 A"/>
    <property type="chains" value="T=1-155"/>
</dbReference>
<dbReference type="PDB" id="9ETZ">
    <property type="method" value="EM"/>
    <property type="resolution" value="2.40 A"/>
    <property type="chains" value="d=30-149"/>
</dbReference>
<dbReference type="PDBsum" id="1HR8"/>
<dbReference type="PDBsum" id="2ODX"/>
<dbReference type="PDBsum" id="6GIQ"/>
<dbReference type="PDBsum" id="6HU9"/>
<dbReference type="PDBsum" id="6T0B"/>
<dbReference type="PDBsum" id="6T15"/>
<dbReference type="PDBsum" id="6YMX"/>
<dbReference type="PDBsum" id="6YMY"/>
<dbReference type="PDBsum" id="7CLV"/>
<dbReference type="PDBsum" id="7Z10"/>
<dbReference type="PDBsum" id="8DH6"/>
<dbReference type="PDBsum" id="8E7S"/>
<dbReference type="PDBsum" id="8EC0"/>
<dbReference type="PDBsum" id="9ETZ"/>
<dbReference type="BMRB" id="P04037"/>
<dbReference type="EMDB" id="EMD-10318"/>
<dbReference type="EMDB" id="EMD-10334"/>
<dbReference type="EMDB" id="EMD-10335"/>
<dbReference type="EMDB" id="EMD-10340"/>
<dbReference type="EMDB" id="EMD-10375"/>
<dbReference type="EMDB" id="EMD-10376"/>
<dbReference type="EMDB" id="EMD-10847"/>
<dbReference type="EMDB" id="EMD-10848"/>
<dbReference type="EMDB" id="EMD-14436"/>
<dbReference type="EMDB" id="EMD-19963"/>
<dbReference type="EMDB" id="EMD-27430"/>
<dbReference type="EMDB" id="EMD-27940"/>
<dbReference type="EMDB" id="EMD-28011"/>
<dbReference type="SMR" id="P04037"/>
<dbReference type="BioGRID" id="33068">
    <property type="interactions" value="270"/>
</dbReference>
<dbReference type="ComplexPortal" id="CPX-1721">
    <property type="entry name" value="Mitochondrial respiratory chain complex IV, COX5A variant"/>
</dbReference>
<dbReference type="ComplexPortal" id="CPX-1722">
    <property type="entry name" value="Mitochondrial respiratory chain complex IV, COX5B variant"/>
</dbReference>
<dbReference type="DIP" id="DIP-2763N"/>
<dbReference type="FunCoup" id="P04037">
    <property type="interactions" value="588"/>
</dbReference>
<dbReference type="IntAct" id="P04037">
    <property type="interactions" value="53"/>
</dbReference>
<dbReference type="MINT" id="P04037"/>
<dbReference type="STRING" id="4932.YGL187C"/>
<dbReference type="TCDB" id="3.D.4.8.1">
    <property type="family name" value="the proton-translocating cytochrome oxidase (cox) superfamily"/>
</dbReference>
<dbReference type="iPTMnet" id="P04037"/>
<dbReference type="PaxDb" id="4932-YGL187C"/>
<dbReference type="PeptideAtlas" id="P04037"/>
<dbReference type="EnsemblFungi" id="YGL187C_mRNA">
    <property type="protein sequence ID" value="YGL187C"/>
    <property type="gene ID" value="YGL187C"/>
</dbReference>
<dbReference type="GeneID" id="852688"/>
<dbReference type="KEGG" id="sce:YGL187C"/>
<dbReference type="AGR" id="SGD:S000003155"/>
<dbReference type="SGD" id="S000003155">
    <property type="gene designation" value="COX4"/>
</dbReference>
<dbReference type="VEuPathDB" id="FungiDB:YGL187C"/>
<dbReference type="eggNOG" id="KOG3352">
    <property type="taxonomic scope" value="Eukaryota"/>
</dbReference>
<dbReference type="GeneTree" id="ENSGT00390000011010"/>
<dbReference type="HOGENOM" id="CLU_091071_2_0_1"/>
<dbReference type="InParanoid" id="P04037"/>
<dbReference type="OMA" id="FDMEPLQ"/>
<dbReference type="OrthoDB" id="10249250at2759"/>
<dbReference type="BioCyc" id="MetaCyc:YGL187C-MONOMER"/>
<dbReference type="BioCyc" id="YEAST:YGL187C-MONOMER"/>
<dbReference type="Reactome" id="R-SCE-9837999">
    <property type="pathway name" value="Mitochondrial protein degradation"/>
</dbReference>
<dbReference type="UniPathway" id="UPA00705"/>
<dbReference type="BioGRID-ORCS" id="852688">
    <property type="hits" value="4 hits in 10 CRISPR screens"/>
</dbReference>
<dbReference type="ChiTaRS" id="COX4">
    <property type="organism name" value="yeast"/>
</dbReference>
<dbReference type="EvolutionaryTrace" id="P04037"/>
<dbReference type="PRO" id="PR:P04037"/>
<dbReference type="Proteomes" id="UP000002311">
    <property type="component" value="Chromosome VII"/>
</dbReference>
<dbReference type="RNAct" id="P04037">
    <property type="molecule type" value="protein"/>
</dbReference>
<dbReference type="GO" id="GO:0005743">
    <property type="term" value="C:mitochondrial inner membrane"/>
    <property type="evidence" value="ECO:0000304"/>
    <property type="project" value="Reactome"/>
</dbReference>
<dbReference type="GO" id="GO:0005758">
    <property type="term" value="C:mitochondrial intermembrane space"/>
    <property type="evidence" value="ECO:0000304"/>
    <property type="project" value="Reactome"/>
</dbReference>
<dbReference type="GO" id="GO:0005739">
    <property type="term" value="C:mitochondrion"/>
    <property type="evidence" value="ECO:0000314"/>
    <property type="project" value="SGD"/>
</dbReference>
<dbReference type="GO" id="GO:0045277">
    <property type="term" value="C:respiratory chain complex IV"/>
    <property type="evidence" value="ECO:0000314"/>
    <property type="project" value="SGD"/>
</dbReference>
<dbReference type="GO" id="GO:0016491">
    <property type="term" value="F:oxidoreductase activity"/>
    <property type="evidence" value="ECO:0007669"/>
    <property type="project" value="UniProtKB-KW"/>
</dbReference>
<dbReference type="GO" id="GO:0008270">
    <property type="term" value="F:zinc ion binding"/>
    <property type="evidence" value="ECO:0000314"/>
    <property type="project" value="SGD"/>
</dbReference>
<dbReference type="GO" id="GO:0033617">
    <property type="term" value="P:mitochondrial cytochrome c oxidase assembly"/>
    <property type="evidence" value="ECO:0000315"/>
    <property type="project" value="CACAO"/>
</dbReference>
<dbReference type="GO" id="GO:0006123">
    <property type="term" value="P:mitochondrial electron transport, cytochrome c to oxygen"/>
    <property type="evidence" value="ECO:0000314"/>
    <property type="project" value="SGD"/>
</dbReference>
<dbReference type="GO" id="GO:1902600">
    <property type="term" value="P:proton transmembrane transport"/>
    <property type="evidence" value="ECO:0007669"/>
    <property type="project" value="GOC"/>
</dbReference>
<dbReference type="CDD" id="cd00924">
    <property type="entry name" value="Cyt_c_Oxidase_Vb"/>
    <property type="match status" value="1"/>
</dbReference>
<dbReference type="FunFam" id="2.60.11.10:FF:000003">
    <property type="entry name" value="Cytochrome c oxidase subunit IV"/>
    <property type="match status" value="1"/>
</dbReference>
<dbReference type="Gene3D" id="2.60.11.10">
    <property type="entry name" value="Cytochrome c oxidase, subunit Vb"/>
    <property type="match status" value="1"/>
</dbReference>
<dbReference type="InterPro" id="IPR002124">
    <property type="entry name" value="Cyt_c_oxidase_su5b"/>
</dbReference>
<dbReference type="InterPro" id="IPR036972">
    <property type="entry name" value="Cyt_c_oxidase_su5b_sf"/>
</dbReference>
<dbReference type="PANTHER" id="PTHR10122:SF0">
    <property type="entry name" value="CYTOCHROME C OXIDASE SUBUNIT 5B, ISOFORM A-RELATED"/>
    <property type="match status" value="1"/>
</dbReference>
<dbReference type="PANTHER" id="PTHR10122">
    <property type="entry name" value="CYTOCHROME C OXIDASE SUBUNIT 5B, MITOCHONDRIAL"/>
    <property type="match status" value="1"/>
</dbReference>
<dbReference type="Pfam" id="PF01215">
    <property type="entry name" value="COX5B"/>
    <property type="match status" value="1"/>
</dbReference>
<dbReference type="SUPFAM" id="SSF57802">
    <property type="entry name" value="Rubredoxin-like"/>
    <property type="match status" value="1"/>
</dbReference>
<dbReference type="PROSITE" id="PS00848">
    <property type="entry name" value="COX5B_1"/>
    <property type="match status" value="1"/>
</dbReference>
<dbReference type="PROSITE" id="PS51359">
    <property type="entry name" value="COX5B_2"/>
    <property type="match status" value="1"/>
</dbReference>
<evidence type="ECO:0000269" key="1">
    <source>
    </source>
</evidence>
<evidence type="ECO:0000269" key="2">
    <source>
    </source>
</evidence>
<evidence type="ECO:0000269" key="3">
    <source>
    </source>
</evidence>
<evidence type="ECO:0000269" key="4">
    <source>
    </source>
</evidence>
<evidence type="ECO:0000269" key="5">
    <source>
    </source>
</evidence>
<evidence type="ECO:0000269" key="6">
    <source>
    </source>
</evidence>
<evidence type="ECO:0000269" key="7">
    <source>
    </source>
</evidence>
<evidence type="ECO:0000269" key="8">
    <source>
    </source>
</evidence>
<evidence type="ECO:0000305" key="9"/>
<evidence type="ECO:0000305" key="10">
    <source>
    </source>
</evidence>
<evidence type="ECO:0007744" key="11">
    <source>
    </source>
</evidence>
<evidence type="ECO:0007829" key="12">
    <source>
        <dbReference type="PDB" id="1HR8"/>
    </source>
</evidence>
<evidence type="ECO:0007829" key="13">
    <source>
        <dbReference type="PDB" id="2ODX"/>
    </source>
</evidence>
<evidence type="ECO:0007829" key="14">
    <source>
        <dbReference type="PDB" id="6T0B"/>
    </source>
</evidence>
<evidence type="ECO:0007829" key="15">
    <source>
        <dbReference type="PDB" id="8DH6"/>
    </source>
</evidence>
<evidence type="ECO:0007829" key="16">
    <source>
        <dbReference type="PDB" id="8E7S"/>
    </source>
</evidence>
<evidence type="ECO:0007829" key="17">
    <source>
        <dbReference type="PDB" id="9ETZ"/>
    </source>
</evidence>
<proteinExistence type="evidence at protein level"/>
<gene>
    <name type="primary">COX4</name>
    <name type="ordered locus">YGL187C</name>
    <name type="ORF">G1362</name>
</gene>
<sequence>MLSLRQSIRFFKPATRTLCSSRYLLQQKPVVKTAQNLAEVNGPETLIGPGAKEGTVPTDLDQETGLARLELLGKLEGIDVFDTKPLDSSRKGTMKDPIIIESYDDYRYVGCTGSPAGSHTIMWLKPTVNEVARCWECGSVYKLNPVGVPNDDHHH</sequence>
<accession>P04037</accession>
<accession>A2TBN6</accession>
<accession>D6VTW7</accession>
<protein>
    <recommendedName>
        <fullName>Cytochrome c oxidase subunit 4, mitochondrial</fullName>
    </recommendedName>
    <alternativeName>
        <fullName>Cytochrome c oxidase polypeptide IV</fullName>
    </alternativeName>
</protein>
<keyword id="KW-0002">3D-structure</keyword>
<keyword id="KW-0903">Direct protein sequencing</keyword>
<keyword id="KW-0472">Membrane</keyword>
<keyword id="KW-0479">Metal-binding</keyword>
<keyword id="KW-0496">Mitochondrion</keyword>
<keyword id="KW-0999">Mitochondrion inner membrane</keyword>
<keyword id="KW-0560">Oxidoreductase</keyword>
<keyword id="KW-0597">Phosphoprotein</keyword>
<keyword id="KW-1185">Reference proteome</keyword>
<keyword id="KW-0809">Transit peptide</keyword>
<keyword id="KW-0862">Zinc</keyword>
<name>COX4_YEAST</name>
<comment type="function">
    <text evidence="10">Component of the cytochrome c oxidase, the last enzyme in the mitochondrial electron transport chain which drives oxidative phosphorylation. The respiratory chain contains 3 multisubunit complexes succinate dehydrogenase (complex II, CII), ubiquinol-cytochrome c oxidoreductase (cytochrome b-c1 complex, complex III, CIII) and cytochrome c oxidase (complex IV, CIV), that cooperate to transfer electrons derived from NADH and succinate to molecular oxygen, creating an electrochemical gradient over the inner membrane that drives transmembrane transport and the ATP synthase. Cytochrome c oxidase is the component of the respiratory chain that catalyzes the reduction of oxygen to water. Electrons originating from reduced cytochrome c in the intermembrane space (IMS) are transferred via the dinuclear copper A center (CU(A)) of COX2 and heme A of COX1 to the active site in COX1, a binuclear center (BNC) formed by heme A3 and copper B (CU(B)). The BNC reduces molecular oxygen to 2 water molecules using 4 electrons from cytochrome c in the IMS and 4 protons from the mitochondrial matrix.</text>
</comment>
<comment type="pathway">
    <text>Energy metabolism; oxidative phosphorylation.</text>
</comment>
<comment type="subunit">
    <text evidence="1 2 5 6 8">Component of the cytochrome c oxidase (complex IV, CIV), a multisubunit enzyme composed of 12 subunits. The complex is composed of a catalytic core of 3 subunits COX1, COX2 and COX3, encoded in the mitochondrial DNA, and 9 supernumerary subunits COX4, COX5A (or COX5B), COX6, COX7, COX8, COX9, COX12, COX13 and COX26, which are encoded in the nuclear genome (PubMed:30598554, PubMed:30598556, PubMed:7851399). The complex exists as a monomer or a dimer and forms supercomplexes (SCs) in the inner mitochondrial membrane with a dimer of ubiquinol-cytochrome c oxidoreductase (cytochrome b-c1 complex, complex III, CIII), resulting in 2 different assemblies (supercomplexes III(2)IV and III(2)IV(2)) (PubMed:10764779, PubMed:10775262, PubMed:30598554, PubMed:30598556).</text>
</comment>
<comment type="subcellular location">
    <subcellularLocation>
        <location evidence="5">Mitochondrion inner membrane</location>
        <topology evidence="5">Peripheral membrane protein</topology>
        <orientation evidence="5">Matrix side</orientation>
    </subcellularLocation>
</comment>
<comment type="miscellaneous">
    <text>Present with 9410 molecules/cell in log phase SD medium.</text>
</comment>
<comment type="similarity">
    <text evidence="9">Belongs to the cytochrome c oxidase subunit 5B family.</text>
</comment>
<organism>
    <name type="scientific">Saccharomyces cerevisiae (strain ATCC 204508 / S288c)</name>
    <name type="common">Baker's yeast</name>
    <dbReference type="NCBI Taxonomy" id="559292"/>
    <lineage>
        <taxon>Eukaryota</taxon>
        <taxon>Fungi</taxon>
        <taxon>Dikarya</taxon>
        <taxon>Ascomycota</taxon>
        <taxon>Saccharomycotina</taxon>
        <taxon>Saccharomycetes</taxon>
        <taxon>Saccharomycetales</taxon>
        <taxon>Saccharomycetaceae</taxon>
        <taxon>Saccharomyces</taxon>
    </lineage>
</organism>
<reference key="1">
    <citation type="journal article" date="1984" name="EMBO J.">
        <title>Subunit IV of yeast cytochrome c oxidase: cloning and nucleotide sequencing of the gene and partial amino acid sequencing of the mature protein.</title>
        <authorList>
            <person name="Maarse A.C."/>
            <person name="van Loon A.P.G.M."/>
            <person name="Riezman H."/>
            <person name="Gregor I."/>
            <person name="Schatz G."/>
            <person name="Grivell L.A."/>
        </authorList>
    </citation>
    <scope>NUCLEOTIDE SEQUENCE [GENOMIC DNA]</scope>
</reference>
<reference key="2">
    <citation type="journal article" date="1997" name="Yeast">
        <title>Sequencing of a 40.5 kb fragment located on the left arm of chromosome VII from Saccharomyces cerevisiae.</title>
        <authorList>
            <person name="Coglievina M."/>
            <person name="Klima R."/>
            <person name="Bertani I."/>
            <person name="Delneri D."/>
            <person name="Zaccaria P."/>
            <person name="Bruschi C.V."/>
        </authorList>
    </citation>
    <scope>NUCLEOTIDE SEQUENCE [GENOMIC DNA]</scope>
    <source>
        <strain>ATCC 96604 / S288c / FY1679</strain>
    </source>
</reference>
<reference key="3">
    <citation type="journal article" date="1997" name="Nature">
        <title>The nucleotide sequence of Saccharomyces cerevisiae chromosome VII.</title>
        <authorList>
            <person name="Tettelin H."/>
            <person name="Agostoni-Carbone M.L."/>
            <person name="Albermann K."/>
            <person name="Albers M."/>
            <person name="Arroyo J."/>
            <person name="Backes U."/>
            <person name="Barreiros T."/>
            <person name="Bertani I."/>
            <person name="Bjourson A.J."/>
            <person name="Brueckner M."/>
            <person name="Bruschi C.V."/>
            <person name="Carignani G."/>
            <person name="Castagnoli L."/>
            <person name="Cerdan E."/>
            <person name="Clemente M.L."/>
            <person name="Coblenz A."/>
            <person name="Coglievina M."/>
            <person name="Coissac E."/>
            <person name="Defoor E."/>
            <person name="Del Bino S."/>
            <person name="Delius H."/>
            <person name="Delneri D."/>
            <person name="de Wergifosse P."/>
            <person name="Dujon B."/>
            <person name="Durand P."/>
            <person name="Entian K.-D."/>
            <person name="Eraso P."/>
            <person name="Escribano V."/>
            <person name="Fabiani L."/>
            <person name="Fartmann B."/>
            <person name="Feroli F."/>
            <person name="Feuermann M."/>
            <person name="Frontali L."/>
            <person name="Garcia-Gonzalez M."/>
            <person name="Garcia-Saez M.I."/>
            <person name="Goffeau A."/>
            <person name="Guerreiro P."/>
            <person name="Hani J."/>
            <person name="Hansen M."/>
            <person name="Hebling U."/>
            <person name="Hernandez K."/>
            <person name="Heumann K."/>
            <person name="Hilger F."/>
            <person name="Hofmann B."/>
            <person name="Indge K.J."/>
            <person name="James C.M."/>
            <person name="Klima R."/>
            <person name="Koetter P."/>
            <person name="Kramer B."/>
            <person name="Kramer W."/>
            <person name="Lauquin G."/>
            <person name="Leuther H."/>
            <person name="Louis E.J."/>
            <person name="Maillier E."/>
            <person name="Marconi A."/>
            <person name="Martegani E."/>
            <person name="Mazon M.J."/>
            <person name="Mazzoni C."/>
            <person name="McReynolds A.D.K."/>
            <person name="Melchioretto P."/>
            <person name="Mewes H.-W."/>
            <person name="Minenkova O."/>
            <person name="Mueller-Auer S."/>
            <person name="Nawrocki A."/>
            <person name="Netter P."/>
            <person name="Neu R."/>
            <person name="Nombela C."/>
            <person name="Oliver S.G."/>
            <person name="Panzeri L."/>
            <person name="Paoluzi S."/>
            <person name="Plevani P."/>
            <person name="Portetelle D."/>
            <person name="Portillo F."/>
            <person name="Potier S."/>
            <person name="Purnelle B."/>
            <person name="Rieger M."/>
            <person name="Riles L."/>
            <person name="Rinaldi T."/>
            <person name="Robben J."/>
            <person name="Rodrigues-Pousada C."/>
            <person name="Rodriguez-Belmonte E."/>
            <person name="Rodriguez-Torres A.M."/>
            <person name="Rose M."/>
            <person name="Ruzzi M."/>
            <person name="Saliola M."/>
            <person name="Sanchez-Perez M."/>
            <person name="Schaefer B."/>
            <person name="Schaefer M."/>
            <person name="Scharfe M."/>
            <person name="Schmidheini T."/>
            <person name="Schreer A."/>
            <person name="Skala J."/>
            <person name="Souciet J.-L."/>
            <person name="Steensma H.Y."/>
            <person name="Talla E."/>
            <person name="Thierry A."/>
            <person name="Vandenbol M."/>
            <person name="van der Aart Q.J.M."/>
            <person name="Van Dyck L."/>
            <person name="Vanoni M."/>
            <person name="Verhasselt P."/>
            <person name="Voet M."/>
            <person name="Volckaert G."/>
            <person name="Wambutt R."/>
            <person name="Watson M.D."/>
            <person name="Weber N."/>
            <person name="Wedler E."/>
            <person name="Wedler H."/>
            <person name="Wipfli P."/>
            <person name="Wolf K."/>
            <person name="Wright L.F."/>
            <person name="Zaccaria P."/>
            <person name="Zimmermann M."/>
            <person name="Zollner A."/>
            <person name="Kleine K."/>
        </authorList>
    </citation>
    <scope>NUCLEOTIDE SEQUENCE [LARGE SCALE GENOMIC DNA]</scope>
    <source>
        <strain>ATCC 204508 / S288c</strain>
    </source>
</reference>
<reference key="4">
    <citation type="journal article" date="2014" name="G3 (Bethesda)">
        <title>The reference genome sequence of Saccharomyces cerevisiae: Then and now.</title>
        <authorList>
            <person name="Engel S.R."/>
            <person name="Dietrich F.S."/>
            <person name="Fisk D.G."/>
            <person name="Binkley G."/>
            <person name="Balakrishnan R."/>
            <person name="Costanzo M.C."/>
            <person name="Dwight S.S."/>
            <person name="Hitz B.C."/>
            <person name="Karra K."/>
            <person name="Nash R.S."/>
            <person name="Weng S."/>
            <person name="Wong E.D."/>
            <person name="Lloyd P."/>
            <person name="Skrzypek M.S."/>
            <person name="Miyasato S.R."/>
            <person name="Simison M."/>
            <person name="Cherry J.M."/>
        </authorList>
    </citation>
    <scope>GENOME REANNOTATION</scope>
    <source>
        <strain>ATCC 204508 / S288c</strain>
    </source>
</reference>
<reference key="5">
    <citation type="journal article" date="2007" name="Proc. Natl. Acad. Sci. U.S.A.">
        <title>High-density yeast-tiling array reveals previously undiscovered introns and extensive regulation of meiotic splicing.</title>
        <authorList>
            <person name="Juneau K."/>
            <person name="Palm C."/>
            <person name="Miranda M."/>
            <person name="Davis R.W."/>
        </authorList>
    </citation>
    <scope>NUCLEOTIDE SEQUENCE [MRNA] OF 1-33</scope>
    <source>
        <strain>ATCC 201390 / BY4743</strain>
    </source>
</reference>
<reference key="6">
    <citation type="journal article" date="1987" name="Nucleic Acids Res.">
        <title>The untranslated leader of nuclear COX4 gene of Saccharomyces cerevisiae contains an intron.</title>
        <authorList>
            <person name="Schneider J.C."/>
            <person name="Guarente L."/>
        </authorList>
    </citation>
    <scope>NUCLEOTIDE SEQUENCE [GENOMIC DNA] OF 1-3</scope>
</reference>
<reference key="7">
    <citation type="journal article" date="1984" name="J. Biol. Chem.">
        <title>The nuclear-coded subunits of yeast cytochrome c oxidase. III. Identification of homologous subunits in yeast, bovine heart, and Neurospora crassa cytochrome c oxidases.</title>
        <authorList>
            <person name="Power S.D."/>
            <person name="Lochrie M.A."/>
            <person name="Poyton R.O."/>
        </authorList>
    </citation>
    <scope>PROTEIN SEQUENCE OF 26-79</scope>
</reference>
<reference key="8">
    <citation type="journal article" date="1992" name="J. Biol. Chem.">
        <title>Purification of yeast cytochrome c oxidase with a subunit composition resembling the mammalian enzyme.</title>
        <authorList>
            <person name="Taanman J.-W."/>
            <person name="Capaldi R.A."/>
        </authorList>
    </citation>
    <scope>PROTEIN SEQUENCE OF 26-30</scope>
    <scope>COMPOSITION OF THE CYTOCHROME C OXIDASE COMPLEX</scope>
</reference>
<reference key="9">
    <citation type="journal article" date="1995" name="Eur. J. Biochem.">
        <title>Kinetic properties and ligand binding of the eleven-subunit cytochrome-c oxidase from Saccharomyces cerevisiae isolated with a novel large-scale purification method.</title>
        <authorList>
            <person name="Geier B.M."/>
            <person name="Schagger H."/>
            <person name="Ortwein C."/>
            <person name="Link T.A."/>
            <person name="Hagen W.R."/>
            <person name="Brandt U."/>
            <person name="Von Jagow G."/>
        </authorList>
    </citation>
    <scope>PROTEIN SEQUENCE OF 26-28</scope>
    <scope>COMPOSITION OF THE CYTOCHROME C OXIDASE COMPLEX</scope>
</reference>
<reference key="10">
    <citation type="journal article" date="2000" name="EMBO J.">
        <title>Supercomplexes in the respiratory chains of yeast and mammalian mitochondria.</title>
        <authorList>
            <person name="Schaegger H."/>
            <person name="Pfeiffer K."/>
        </authorList>
    </citation>
    <scope>FORMATION OF CYTOCHROME BC1-CYTOCHROME C OXIDASE SUPERCOMPLEX</scope>
</reference>
<reference key="11">
    <citation type="journal article" date="2000" name="J. Biol. Chem.">
        <title>The cytochrome bc1 and cytochrome c oxidase complexes associate to form a single supracomplex in yeast mitochondria.</title>
        <authorList>
            <person name="Cruciat C.M."/>
            <person name="Brunner S."/>
            <person name="Baumann F."/>
            <person name="Neupert W."/>
            <person name="Stuart R.A."/>
        </authorList>
    </citation>
    <scope>FORMATION OF CYTOCHROME BC1-CYTOCHROME C OXIDASE SUPERCOMPLEX</scope>
</reference>
<reference key="12">
    <citation type="journal article" date="2007" name="Mol. Cell. Proteomics">
        <title>Profiling phosphoproteins of yeast mitochondria reveals a role of phosphorylation in assembly of the ATP synthase.</title>
        <authorList>
            <person name="Reinders J."/>
            <person name="Wagner K."/>
            <person name="Zahedi R.P."/>
            <person name="Stojanovski D."/>
            <person name="Eyrich B."/>
            <person name="van der Laan M."/>
            <person name="Rehling P."/>
            <person name="Sickmann A."/>
            <person name="Pfanner N."/>
            <person name="Meisinger C."/>
        </authorList>
    </citation>
    <scope>PHOSPHORYLATION [LARGE SCALE ANALYSIS] AT THR-55</scope>
    <scope>IDENTIFICATION BY MASS SPECTROMETRY [LARGE SCALE ANALYSIS]</scope>
    <source>
        <strain>ATCC 76625 / YPH499</strain>
    </source>
</reference>
<reference key="13">
    <citation type="journal article" date="2001" name="Structure">
        <title>Crystal structures of mitochondrial processing peptidase reveal the mode for specific cleavage of import signal sequences.</title>
        <authorList>
            <person name="Taylor A.B."/>
            <person name="Smith B.S."/>
            <person name="Kitada S."/>
            <person name="Kojima K."/>
            <person name="Miyaura H."/>
            <person name="Otwinowski Z."/>
            <person name="Ito A."/>
            <person name="Deisenhofer J."/>
        </authorList>
    </citation>
    <scope>X-RAY CRYSTALLOGRAPHY (2.7 ANGSTROMS) OF 2-25 IN COMPLEX WITH MAS1/MAS2 HETERODIMER</scope>
</reference>
<reference key="14">
    <citation type="journal article" date="2007" name="J. Biol. Chem.">
        <title>The characterization and role of zinc binding in yeast Cox4.</title>
        <authorList>
            <person name="Coyne H.J. III"/>
            <person name="Ciofi-Baffoni S."/>
            <person name="Banci L."/>
            <person name="Bertini I."/>
            <person name="Zhang L."/>
            <person name="George G.N."/>
            <person name="Winge D.R."/>
        </authorList>
    </citation>
    <scope>STRUCTURE BY NMR OF 79-155 IN COMPLEX WITH ZINC</scope>
</reference>
<reference key="15">
    <citation type="journal article" date="2019" name="Nat. Struct. Mol. Biol.">
        <title>Cryo-EM structure of the yeast respiratory supercomplex.</title>
        <authorList>
            <person name="Rathore S."/>
            <person name="Berndtsson J."/>
            <person name="Marin-Buera L."/>
            <person name="Conrad J."/>
            <person name="Carroni M."/>
            <person name="Brzezinski P."/>
            <person name="Ott M."/>
        </authorList>
    </citation>
    <scope>STRUCTURE BY ELECTRON MICROSCOPY (3.23 ANGSTROMS) OF 1-155</scope>
</reference>
<reference key="16">
    <citation type="journal article" date="2019" name="Nat. Struct. Mol. Biol.">
        <title>Structure of yeast cytochrome c oxidase in a supercomplex with cytochrome bc1.</title>
        <authorList>
            <person name="Hartley A.M."/>
            <person name="Lukoyanova N."/>
            <person name="Zhang Y."/>
            <person name="Cabrera-Orefice A."/>
            <person name="Arnold S."/>
            <person name="Meunier B."/>
            <person name="Pinotsis N."/>
            <person name="Marechal A."/>
        </authorList>
    </citation>
    <scope>STRUCTURE BY ELECTRON MICROSCOPY (3.35 ANGSTROMS) IN COMPLEX WITH ZINC</scope>
    <scope>FUNCTION</scope>
</reference>
<feature type="transit peptide" description="Mitochondrion" evidence="3 7 8">
    <location>
        <begin position="1"/>
        <end position="25"/>
    </location>
</feature>
<feature type="chain" id="PRO_0000006114" description="Cytochrome c oxidase subunit 4, mitochondrial">
    <location>
        <begin position="26"/>
        <end position="155"/>
    </location>
</feature>
<feature type="binding site" evidence="4 5">
    <location>
        <position position="111"/>
    </location>
    <ligand>
        <name>Zn(2+)</name>
        <dbReference type="ChEBI" id="CHEBI:29105"/>
    </ligand>
</feature>
<feature type="binding site" evidence="4 5">
    <location>
        <position position="119"/>
    </location>
    <ligand>
        <name>Zn(2+)</name>
        <dbReference type="ChEBI" id="CHEBI:29105"/>
    </ligand>
</feature>
<feature type="binding site" evidence="4 5">
    <location>
        <position position="134"/>
    </location>
    <ligand>
        <name>Zn(2+)</name>
        <dbReference type="ChEBI" id="CHEBI:29105"/>
    </ligand>
</feature>
<feature type="binding site" evidence="4 5">
    <location>
        <position position="137"/>
    </location>
    <ligand>
        <name>Zn(2+)</name>
        <dbReference type="ChEBI" id="CHEBI:29105"/>
    </ligand>
</feature>
<feature type="modified residue" description="Phosphothreonine" evidence="11">
    <location>
        <position position="55"/>
    </location>
</feature>
<feature type="sequence conflict" description="In Ref. 7; AA sequence, 8; AA sequence and 9; AA sequence." evidence="9" ref="7 8 9">
    <original>Q</original>
    <variation>E</variation>
    <location>
        <position position="26"/>
    </location>
</feature>
<feature type="sequence conflict" description="In Ref. 7; AA sequence." evidence="9" ref="7">
    <original>G</original>
    <variation>C</variation>
    <location>
        <position position="73"/>
    </location>
</feature>
<feature type="strand" evidence="12">
    <location>
        <begin position="15"/>
        <end position="17"/>
    </location>
</feature>
<feature type="helix" evidence="17">
    <location>
        <begin position="37"/>
        <end position="39"/>
    </location>
</feature>
<feature type="strand" evidence="14">
    <location>
        <begin position="42"/>
        <end position="44"/>
    </location>
</feature>
<feature type="strand" evidence="15">
    <location>
        <begin position="53"/>
        <end position="55"/>
    </location>
</feature>
<feature type="helix" evidence="17">
    <location>
        <begin position="59"/>
        <end position="62"/>
    </location>
</feature>
<feature type="helix" evidence="17">
    <location>
        <begin position="65"/>
        <end position="76"/>
    </location>
</feature>
<feature type="strand" evidence="16">
    <location>
        <begin position="88"/>
        <end position="90"/>
    </location>
</feature>
<feature type="strand" evidence="17">
    <location>
        <begin position="94"/>
        <end position="96"/>
    </location>
</feature>
<feature type="strand" evidence="17">
    <location>
        <begin position="98"/>
        <end position="106"/>
    </location>
</feature>
<feature type="strand" evidence="17">
    <location>
        <begin position="109"/>
        <end position="111"/>
    </location>
</feature>
<feature type="strand" evidence="14">
    <location>
        <begin position="114"/>
        <end position="119"/>
    </location>
</feature>
<feature type="strand" evidence="17">
    <location>
        <begin position="122"/>
        <end position="124"/>
    </location>
</feature>
<feature type="strand" evidence="14">
    <location>
        <begin position="127"/>
        <end position="129"/>
    </location>
</feature>
<feature type="strand" evidence="13">
    <location>
        <begin position="131"/>
        <end position="133"/>
    </location>
</feature>
<feature type="turn" evidence="17">
    <location>
        <begin position="135"/>
        <end position="137"/>
    </location>
</feature>
<feature type="strand" evidence="17">
    <location>
        <begin position="140"/>
        <end position="145"/>
    </location>
</feature>